<reference key="1">
    <citation type="journal article" date="2000" name="Nature">
        <title>Sequence and analysis of chromosome 3 of the plant Arabidopsis thaliana.</title>
        <authorList>
            <person name="Salanoubat M."/>
            <person name="Lemcke K."/>
            <person name="Rieger M."/>
            <person name="Ansorge W."/>
            <person name="Unseld M."/>
            <person name="Fartmann B."/>
            <person name="Valle G."/>
            <person name="Bloecker H."/>
            <person name="Perez-Alonso M."/>
            <person name="Obermaier B."/>
            <person name="Delseny M."/>
            <person name="Boutry M."/>
            <person name="Grivell L.A."/>
            <person name="Mache R."/>
            <person name="Puigdomenech P."/>
            <person name="De Simone V."/>
            <person name="Choisne N."/>
            <person name="Artiguenave F."/>
            <person name="Robert C."/>
            <person name="Brottier P."/>
            <person name="Wincker P."/>
            <person name="Cattolico L."/>
            <person name="Weissenbach J."/>
            <person name="Saurin W."/>
            <person name="Quetier F."/>
            <person name="Schaefer M."/>
            <person name="Mueller-Auer S."/>
            <person name="Gabel C."/>
            <person name="Fuchs M."/>
            <person name="Benes V."/>
            <person name="Wurmbach E."/>
            <person name="Drzonek H."/>
            <person name="Erfle H."/>
            <person name="Jordan N."/>
            <person name="Bangert S."/>
            <person name="Wiedelmann R."/>
            <person name="Kranz H."/>
            <person name="Voss H."/>
            <person name="Holland R."/>
            <person name="Brandt P."/>
            <person name="Nyakatura G."/>
            <person name="Vezzi A."/>
            <person name="D'Angelo M."/>
            <person name="Pallavicini A."/>
            <person name="Toppo S."/>
            <person name="Simionati B."/>
            <person name="Conrad A."/>
            <person name="Hornischer K."/>
            <person name="Kauer G."/>
            <person name="Loehnert T.-H."/>
            <person name="Nordsiek G."/>
            <person name="Reichelt J."/>
            <person name="Scharfe M."/>
            <person name="Schoen O."/>
            <person name="Bargues M."/>
            <person name="Terol J."/>
            <person name="Climent J."/>
            <person name="Navarro P."/>
            <person name="Collado C."/>
            <person name="Perez-Perez A."/>
            <person name="Ottenwaelder B."/>
            <person name="Duchemin D."/>
            <person name="Cooke R."/>
            <person name="Laudie M."/>
            <person name="Berger-Llauro C."/>
            <person name="Purnelle B."/>
            <person name="Masuy D."/>
            <person name="de Haan M."/>
            <person name="Maarse A.C."/>
            <person name="Alcaraz J.-P."/>
            <person name="Cottet A."/>
            <person name="Casacuberta E."/>
            <person name="Monfort A."/>
            <person name="Argiriou A."/>
            <person name="Flores M."/>
            <person name="Liguori R."/>
            <person name="Vitale D."/>
            <person name="Mannhaupt G."/>
            <person name="Haase D."/>
            <person name="Schoof H."/>
            <person name="Rudd S."/>
            <person name="Zaccaria P."/>
            <person name="Mewes H.-W."/>
            <person name="Mayer K.F.X."/>
            <person name="Kaul S."/>
            <person name="Town C.D."/>
            <person name="Koo H.L."/>
            <person name="Tallon L.J."/>
            <person name="Jenkins J."/>
            <person name="Rooney T."/>
            <person name="Rizzo M."/>
            <person name="Walts A."/>
            <person name="Utterback T."/>
            <person name="Fujii C.Y."/>
            <person name="Shea T.P."/>
            <person name="Creasy T.H."/>
            <person name="Haas B."/>
            <person name="Maiti R."/>
            <person name="Wu D."/>
            <person name="Peterson J."/>
            <person name="Van Aken S."/>
            <person name="Pai G."/>
            <person name="Militscher J."/>
            <person name="Sellers P."/>
            <person name="Gill J.E."/>
            <person name="Feldblyum T.V."/>
            <person name="Preuss D."/>
            <person name="Lin X."/>
            <person name="Nierman W.C."/>
            <person name="Salzberg S.L."/>
            <person name="White O."/>
            <person name="Venter J.C."/>
            <person name="Fraser C.M."/>
            <person name="Kaneko T."/>
            <person name="Nakamura Y."/>
            <person name="Sato S."/>
            <person name="Kato T."/>
            <person name="Asamizu E."/>
            <person name="Sasamoto S."/>
            <person name="Kimura T."/>
            <person name="Idesawa K."/>
            <person name="Kawashima K."/>
            <person name="Kishida Y."/>
            <person name="Kiyokawa C."/>
            <person name="Kohara M."/>
            <person name="Matsumoto M."/>
            <person name="Matsuno A."/>
            <person name="Muraki A."/>
            <person name="Nakayama S."/>
            <person name="Nakazaki N."/>
            <person name="Shinpo S."/>
            <person name="Takeuchi C."/>
            <person name="Wada T."/>
            <person name="Watanabe A."/>
            <person name="Yamada M."/>
            <person name="Yasuda M."/>
            <person name="Tabata S."/>
        </authorList>
    </citation>
    <scope>NUCLEOTIDE SEQUENCE [LARGE SCALE GENOMIC DNA]</scope>
    <source>
        <strain>cv. Columbia</strain>
    </source>
</reference>
<reference key="2">
    <citation type="journal article" date="2017" name="Plant J.">
        <title>Araport11: a complete reannotation of the Arabidopsis thaliana reference genome.</title>
        <authorList>
            <person name="Cheng C.Y."/>
            <person name="Krishnakumar V."/>
            <person name="Chan A.P."/>
            <person name="Thibaud-Nissen F."/>
            <person name="Schobel S."/>
            <person name="Town C.D."/>
        </authorList>
    </citation>
    <scope>GENOME REANNOTATION</scope>
    <source>
        <strain>cv. Columbia</strain>
    </source>
</reference>
<reference key="3">
    <citation type="journal article" date="2002" name="Crit. Rev. Plant Sci.">
        <title>Lectin receptor kinases in plants.</title>
        <authorList>
            <person name="Barre A."/>
            <person name="Herve C."/>
            <person name="Lescure B."/>
            <person name="Rouge P."/>
        </authorList>
    </citation>
    <scope>GENE FAMILY</scope>
</reference>
<reference key="4">
    <citation type="journal article" date="2009" name="J. Exp. Bot.">
        <title>Arabidopsis L-type lectin receptor kinases: phylogeny, classification, and expression profiles.</title>
        <authorList>
            <person name="Bouwmeester K."/>
            <person name="Govers F."/>
        </authorList>
    </citation>
    <scope>GENE FAMILY</scope>
    <scope>NOMENCLATURE</scope>
</reference>
<organism>
    <name type="scientific">Arabidopsis thaliana</name>
    <name type="common">Mouse-ear cress</name>
    <dbReference type="NCBI Taxonomy" id="3702"/>
    <lineage>
        <taxon>Eukaryota</taxon>
        <taxon>Viridiplantae</taxon>
        <taxon>Streptophyta</taxon>
        <taxon>Embryophyta</taxon>
        <taxon>Tracheophyta</taxon>
        <taxon>Spermatophyta</taxon>
        <taxon>Magnoliopsida</taxon>
        <taxon>eudicotyledons</taxon>
        <taxon>Gunneridae</taxon>
        <taxon>Pentapetalae</taxon>
        <taxon>rosids</taxon>
        <taxon>malvids</taxon>
        <taxon>Brassicales</taxon>
        <taxon>Brassicaceae</taxon>
        <taxon>Camelineae</taxon>
        <taxon>Arabidopsis</taxon>
    </lineage>
</organism>
<dbReference type="EC" id="2.7.11.1"/>
<dbReference type="EMBL" id="AL138647">
    <property type="protein sequence ID" value="CAB75794.1"/>
    <property type="molecule type" value="Genomic_DNA"/>
</dbReference>
<dbReference type="EMBL" id="CP002686">
    <property type="protein sequence ID" value="AEE79961.1"/>
    <property type="molecule type" value="Genomic_DNA"/>
</dbReference>
<dbReference type="PIR" id="T47799">
    <property type="entry name" value="T47799"/>
</dbReference>
<dbReference type="RefSeq" id="NP_191534.1">
    <property type="nucleotide sequence ID" value="NM_115837.2"/>
</dbReference>
<dbReference type="SMR" id="Q9M1Z9"/>
<dbReference type="STRING" id="3702.Q9M1Z9"/>
<dbReference type="GlyCosmos" id="Q9M1Z9">
    <property type="glycosylation" value="4 sites, No reported glycans"/>
</dbReference>
<dbReference type="GlyGen" id="Q9M1Z9">
    <property type="glycosylation" value="5 sites"/>
</dbReference>
<dbReference type="PaxDb" id="3702-AT3G59750.1"/>
<dbReference type="ProteomicsDB" id="238722"/>
<dbReference type="EnsemblPlants" id="AT3G59750.1">
    <property type="protein sequence ID" value="AT3G59750.1"/>
    <property type="gene ID" value="AT3G59750"/>
</dbReference>
<dbReference type="GeneID" id="825144"/>
<dbReference type="Gramene" id="AT3G59750.1">
    <property type="protein sequence ID" value="AT3G59750.1"/>
    <property type="gene ID" value="AT3G59750"/>
</dbReference>
<dbReference type="KEGG" id="ath:AT3G59750"/>
<dbReference type="Araport" id="AT3G59750"/>
<dbReference type="TAIR" id="AT3G59750">
    <property type="gene designation" value="LECRK-V.8"/>
</dbReference>
<dbReference type="HOGENOM" id="CLU_000288_62_3_1"/>
<dbReference type="InParanoid" id="Q9M1Z9"/>
<dbReference type="OMA" id="IEDENCS"/>
<dbReference type="PhylomeDB" id="Q9M1Z9"/>
<dbReference type="PRO" id="PR:Q9M1Z9"/>
<dbReference type="Proteomes" id="UP000006548">
    <property type="component" value="Chromosome 3"/>
</dbReference>
<dbReference type="ExpressionAtlas" id="Q9M1Z9">
    <property type="expression patterns" value="baseline and differential"/>
</dbReference>
<dbReference type="GO" id="GO:0005886">
    <property type="term" value="C:plasma membrane"/>
    <property type="evidence" value="ECO:0000250"/>
    <property type="project" value="UniProtKB"/>
</dbReference>
<dbReference type="GO" id="GO:0005524">
    <property type="term" value="F:ATP binding"/>
    <property type="evidence" value="ECO:0007669"/>
    <property type="project" value="UniProtKB-KW"/>
</dbReference>
<dbReference type="GO" id="GO:0030246">
    <property type="term" value="F:carbohydrate binding"/>
    <property type="evidence" value="ECO:0007669"/>
    <property type="project" value="UniProtKB-KW"/>
</dbReference>
<dbReference type="GO" id="GO:0106310">
    <property type="term" value="F:protein serine kinase activity"/>
    <property type="evidence" value="ECO:0007669"/>
    <property type="project" value="RHEA"/>
</dbReference>
<dbReference type="GO" id="GO:0004674">
    <property type="term" value="F:protein serine/threonine kinase activity"/>
    <property type="evidence" value="ECO:0007669"/>
    <property type="project" value="UniProtKB-KW"/>
</dbReference>
<dbReference type="CDD" id="cd06899">
    <property type="entry name" value="lectin_legume_LecRK_Arcelin_ConA"/>
    <property type="match status" value="1"/>
</dbReference>
<dbReference type="FunFam" id="1.10.510.10:FF:000108">
    <property type="entry name" value="L-type lectin-domain containing receptor kinase S.4"/>
    <property type="match status" value="1"/>
</dbReference>
<dbReference type="FunFam" id="3.30.200.20:FF:000112">
    <property type="entry name" value="Lectin-domain containing receptor kinase A4.3"/>
    <property type="match status" value="1"/>
</dbReference>
<dbReference type="FunFam" id="2.60.120.200:FF:000571">
    <property type="entry name" value="Putative L-type lectin-domain containing receptor kinase V.8"/>
    <property type="match status" value="1"/>
</dbReference>
<dbReference type="Gene3D" id="2.60.120.200">
    <property type="match status" value="2"/>
</dbReference>
<dbReference type="Gene3D" id="3.30.200.20">
    <property type="entry name" value="Phosphorylase Kinase, domain 1"/>
    <property type="match status" value="1"/>
</dbReference>
<dbReference type="Gene3D" id="1.10.510.10">
    <property type="entry name" value="Transferase(Phosphotransferase) domain 1"/>
    <property type="match status" value="1"/>
</dbReference>
<dbReference type="InterPro" id="IPR013320">
    <property type="entry name" value="ConA-like_dom_sf"/>
</dbReference>
<dbReference type="InterPro" id="IPR011009">
    <property type="entry name" value="Kinase-like_dom_sf"/>
</dbReference>
<dbReference type="InterPro" id="IPR050528">
    <property type="entry name" value="L-type_Lectin-RKs"/>
</dbReference>
<dbReference type="InterPro" id="IPR001220">
    <property type="entry name" value="Legume_lectin_dom"/>
</dbReference>
<dbReference type="InterPro" id="IPR000719">
    <property type="entry name" value="Prot_kinase_dom"/>
</dbReference>
<dbReference type="InterPro" id="IPR017441">
    <property type="entry name" value="Protein_kinase_ATP_BS"/>
</dbReference>
<dbReference type="InterPro" id="IPR008271">
    <property type="entry name" value="Ser/Thr_kinase_AS"/>
</dbReference>
<dbReference type="PANTHER" id="PTHR27007">
    <property type="match status" value="1"/>
</dbReference>
<dbReference type="Pfam" id="PF00139">
    <property type="entry name" value="Lectin_legB"/>
    <property type="match status" value="2"/>
</dbReference>
<dbReference type="Pfam" id="PF00069">
    <property type="entry name" value="Pkinase"/>
    <property type="match status" value="1"/>
</dbReference>
<dbReference type="SMART" id="SM00220">
    <property type="entry name" value="S_TKc"/>
    <property type="match status" value="1"/>
</dbReference>
<dbReference type="SUPFAM" id="SSF49899">
    <property type="entry name" value="Concanavalin A-like lectins/glucanases"/>
    <property type="match status" value="1"/>
</dbReference>
<dbReference type="SUPFAM" id="SSF56112">
    <property type="entry name" value="Protein kinase-like (PK-like)"/>
    <property type="match status" value="1"/>
</dbReference>
<dbReference type="PROSITE" id="PS00107">
    <property type="entry name" value="PROTEIN_KINASE_ATP"/>
    <property type="match status" value="1"/>
</dbReference>
<dbReference type="PROSITE" id="PS50011">
    <property type="entry name" value="PROTEIN_KINASE_DOM"/>
    <property type="match status" value="1"/>
</dbReference>
<dbReference type="PROSITE" id="PS00108">
    <property type="entry name" value="PROTEIN_KINASE_ST"/>
    <property type="match status" value="1"/>
</dbReference>
<proteinExistence type="inferred from homology"/>
<accession>Q9M1Z9</accession>
<sequence>MPSELKVLHIVLVLLYTLSSSTYNSNGNWTLEGSAADNSIGDTILTNTKKHSCGQTFNNESIPIKDSSFSFHFLFGIVPEHTQSGSHGMSFVISPTAGLPGASSDQYLGLFNETTNGKSSNHVIAIELDIQKDQEFGDIDDNHVAMVMRLSIVYSHPDQQLNVTLFPAEIPVPPRKPLLSLNRDLSPYFLEEMYYGYTASTGSIGAFHYMLSSYATPKVENPTWEFIVVPTLPPYPKKSSDRTKKILAVCLTLAVFAVFVASGICFVFYTRHKKVKEVLEEWEIQYGPHRFAYKELLNATKDFKEKQLLGKGGFGQVFKGTLPGSNAEIAVKRTSHDSRQGMSEFLAEISTIGRLRHPNLVRLLGYCRHKENLYLVYDFTPNGSLDKYLDRNENQERLTWEQRFKIIKDVASALLHLHQEWVQIIIHRDIKPANVLIDHEMNARIGDFGLAKLYDQGLDPQTSRVAGTFGYIAPELLRTGRATTSTDVYAFGLVMLEVVCGRRMIERRAPENEEVLVDWILELWESGKLFDAAEESIRQEQNRGEIELLLKLGLLCAHHTELIRPNMSAVMQILNGVSQLPDNLLDVVRAENLRGMPETSIEVLLGLNLYSVGTMTLTNSFLSHGR</sequence>
<protein>
    <recommendedName>
        <fullName>Putative L-type lectin-domain containing receptor kinase V.8</fullName>
        <shortName>LecRK-V.8</shortName>
        <ecNumber>2.7.11.1</ecNumber>
    </recommendedName>
</protein>
<feature type="signal peptide" evidence="2">
    <location>
        <begin position="1"/>
        <end position="21"/>
    </location>
</feature>
<feature type="chain" id="PRO_0000403096" description="Putative L-type lectin-domain containing receptor kinase V.8">
    <location>
        <begin position="22"/>
        <end position="626"/>
    </location>
</feature>
<feature type="topological domain" description="Extracellular" evidence="2">
    <location>
        <begin position="22"/>
        <end position="245"/>
    </location>
</feature>
<feature type="transmembrane region" description="Helical" evidence="2">
    <location>
        <begin position="246"/>
        <end position="266"/>
    </location>
</feature>
<feature type="topological domain" description="Cytoplasmic" evidence="2">
    <location>
        <begin position="267"/>
        <end position="626"/>
    </location>
</feature>
<feature type="domain" description="Protein kinase" evidence="3">
    <location>
        <begin position="303"/>
        <end position="562"/>
    </location>
</feature>
<feature type="region of interest" description="Legume-lectin like">
    <location>
        <begin position="22"/>
        <end position="212"/>
    </location>
</feature>
<feature type="active site" description="Proton acceptor" evidence="3 4">
    <location>
        <position position="429"/>
    </location>
</feature>
<feature type="binding site" evidence="3">
    <location>
        <begin position="309"/>
        <end position="317"/>
    </location>
    <ligand>
        <name>ATP</name>
        <dbReference type="ChEBI" id="CHEBI:30616"/>
    </ligand>
</feature>
<feature type="binding site" evidence="3">
    <location>
        <position position="332"/>
    </location>
    <ligand>
        <name>ATP</name>
        <dbReference type="ChEBI" id="CHEBI:30616"/>
    </ligand>
</feature>
<feature type="glycosylation site" description="N-linked (GlcNAc...) asparagine" evidence="2">
    <location>
        <position position="28"/>
    </location>
</feature>
<feature type="glycosylation site" description="N-linked (GlcNAc...) asparagine" evidence="2">
    <location>
        <position position="59"/>
    </location>
</feature>
<feature type="glycosylation site" description="N-linked (GlcNAc...) asparagine" evidence="2">
    <location>
        <position position="112"/>
    </location>
</feature>
<feature type="glycosylation site" description="N-linked (GlcNAc...) asparagine" evidence="2">
    <location>
        <position position="162"/>
    </location>
</feature>
<comment type="catalytic activity">
    <reaction>
        <text>L-seryl-[protein] + ATP = O-phospho-L-seryl-[protein] + ADP + H(+)</text>
        <dbReference type="Rhea" id="RHEA:17989"/>
        <dbReference type="Rhea" id="RHEA-COMP:9863"/>
        <dbReference type="Rhea" id="RHEA-COMP:11604"/>
        <dbReference type="ChEBI" id="CHEBI:15378"/>
        <dbReference type="ChEBI" id="CHEBI:29999"/>
        <dbReference type="ChEBI" id="CHEBI:30616"/>
        <dbReference type="ChEBI" id="CHEBI:83421"/>
        <dbReference type="ChEBI" id="CHEBI:456216"/>
        <dbReference type="EC" id="2.7.11.1"/>
    </reaction>
</comment>
<comment type="catalytic activity">
    <reaction>
        <text>L-threonyl-[protein] + ATP = O-phospho-L-threonyl-[protein] + ADP + H(+)</text>
        <dbReference type="Rhea" id="RHEA:46608"/>
        <dbReference type="Rhea" id="RHEA-COMP:11060"/>
        <dbReference type="Rhea" id="RHEA-COMP:11605"/>
        <dbReference type="ChEBI" id="CHEBI:15378"/>
        <dbReference type="ChEBI" id="CHEBI:30013"/>
        <dbReference type="ChEBI" id="CHEBI:30616"/>
        <dbReference type="ChEBI" id="CHEBI:61977"/>
        <dbReference type="ChEBI" id="CHEBI:456216"/>
        <dbReference type="EC" id="2.7.11.1"/>
    </reaction>
</comment>
<comment type="subcellular location">
    <subcellularLocation>
        <location evidence="1">Cell membrane</location>
        <topology evidence="1">Single-pass type I membrane protein</topology>
    </subcellularLocation>
</comment>
<comment type="similarity">
    <text evidence="5">In the C-terminal section; belongs to the protein kinase superfamily. Ser/Thr protein kinase family.</text>
</comment>
<comment type="similarity">
    <text evidence="5">In the N-terminal section; belongs to the leguminous lectin family.</text>
</comment>
<name>LRK58_ARATH</name>
<gene>
    <name type="primary">LECRK58</name>
    <name type="ordered locus">At3g59750</name>
    <name type="ORF">F24G16.20</name>
</gene>
<evidence type="ECO:0000250" key="1"/>
<evidence type="ECO:0000255" key="2"/>
<evidence type="ECO:0000255" key="3">
    <source>
        <dbReference type="PROSITE-ProRule" id="PRU00159"/>
    </source>
</evidence>
<evidence type="ECO:0000255" key="4">
    <source>
        <dbReference type="PROSITE-ProRule" id="PRU10027"/>
    </source>
</evidence>
<evidence type="ECO:0000305" key="5"/>
<keyword id="KW-0067">ATP-binding</keyword>
<keyword id="KW-1003">Cell membrane</keyword>
<keyword id="KW-0325">Glycoprotein</keyword>
<keyword id="KW-0418">Kinase</keyword>
<keyword id="KW-0430">Lectin</keyword>
<keyword id="KW-0472">Membrane</keyword>
<keyword id="KW-0547">Nucleotide-binding</keyword>
<keyword id="KW-0675">Receptor</keyword>
<keyword id="KW-1185">Reference proteome</keyword>
<keyword id="KW-0723">Serine/threonine-protein kinase</keyword>
<keyword id="KW-0732">Signal</keyword>
<keyword id="KW-0808">Transferase</keyword>
<keyword id="KW-0812">Transmembrane</keyword>
<keyword id="KW-1133">Transmembrane helix</keyword>